<evidence type="ECO:0000250" key="1">
    <source>
        <dbReference type="UniProtKB" id="Q9UK53"/>
    </source>
</evidence>
<evidence type="ECO:0000255" key="2"/>
<evidence type="ECO:0000255" key="3">
    <source>
        <dbReference type="PROSITE-ProRule" id="PRU00146"/>
    </source>
</evidence>
<evidence type="ECO:0000256" key="4">
    <source>
        <dbReference type="SAM" id="MobiDB-lite"/>
    </source>
</evidence>
<evidence type="ECO:0000269" key="5">
    <source>
    </source>
</evidence>
<evidence type="ECO:0000269" key="6">
    <source>
    </source>
</evidence>
<evidence type="ECO:0000269" key="7">
    <source>
    </source>
</evidence>
<evidence type="ECO:0000269" key="8">
    <source>
    </source>
</evidence>
<evidence type="ECO:0000269" key="9">
    <source>
    </source>
</evidence>
<evidence type="ECO:0000269" key="10">
    <source>
    </source>
</evidence>
<evidence type="ECO:0000269" key="11">
    <source>
    </source>
</evidence>
<evidence type="ECO:0000303" key="12">
    <source>
    </source>
</evidence>
<evidence type="ECO:0000303" key="13">
    <source>
    </source>
</evidence>
<evidence type="ECO:0000305" key="14"/>
<name>ING2_HUMAN</name>
<organism>
    <name type="scientific">Homo sapiens</name>
    <name type="common">Human</name>
    <dbReference type="NCBI Taxonomy" id="9606"/>
    <lineage>
        <taxon>Eukaryota</taxon>
        <taxon>Metazoa</taxon>
        <taxon>Chordata</taxon>
        <taxon>Craniata</taxon>
        <taxon>Vertebrata</taxon>
        <taxon>Euteleostomi</taxon>
        <taxon>Mammalia</taxon>
        <taxon>Eutheria</taxon>
        <taxon>Euarchontoglires</taxon>
        <taxon>Primates</taxon>
        <taxon>Haplorrhini</taxon>
        <taxon>Catarrhini</taxon>
        <taxon>Hominidae</taxon>
        <taxon>Homo</taxon>
    </lineage>
</organism>
<accession>Q9H160</accession>
<accession>B6ZDS1</accession>
<accession>O95698</accession>
<sequence length="280" mass="32808">MLGQQQQQLYSSAALLTGERSRLLTCYVQDYLECVESLPHDMQRNVSVLRELDNKYQETLKEIDDVYEKYKKEDDLNQKKRLQQLLQRALINSQELGDEKIQIVTQMLELVENRARQMELHSQCFQDPAESERASDKAKMDSSQPERSSRRPRRQRTSESRDLCHMANGIEDCDDQPPKEKKSKSAKKKKRSKAKQEREASPVEFAIDPNEPTYCLCNQVSYGEMIGCDNEQCPIEWFHFSCVSLTYKPKGKWYCPKCRGDNEKTMDKSTEKTKKDRRSR</sequence>
<dbReference type="EMBL" id="AB012853">
    <property type="protein sequence ID" value="BAA36419.1"/>
    <property type="molecule type" value="mRNA"/>
</dbReference>
<dbReference type="EMBL" id="AF053537">
    <property type="protein sequence ID" value="AAG11395.1"/>
    <property type="molecule type" value="mRNA"/>
</dbReference>
<dbReference type="EMBL" id="AF062748">
    <property type="protein sequence ID" value="AAG11396.1"/>
    <property type="molecule type" value="Genomic_DNA"/>
</dbReference>
<dbReference type="EMBL" id="AF062747">
    <property type="protein sequence ID" value="AAG11396.1"/>
    <property type="status" value="JOINED"/>
    <property type="molecule type" value="Genomic_DNA"/>
</dbReference>
<dbReference type="EMBL" id="AB196793">
    <property type="protein sequence ID" value="BAF30476.1"/>
    <property type="molecule type" value="mRNA"/>
</dbReference>
<dbReference type="EMBL" id="AJ006851">
    <property type="protein sequence ID" value="CAC20567.1"/>
    <property type="molecule type" value="mRNA"/>
</dbReference>
<dbReference type="EMBL" id="AK294310">
    <property type="protein sequence ID" value="BAH11731.1"/>
    <property type="molecule type" value="mRNA"/>
</dbReference>
<dbReference type="EMBL" id="AC107214">
    <property type="status" value="NOT_ANNOTATED_CDS"/>
    <property type="molecule type" value="Genomic_DNA"/>
</dbReference>
<dbReference type="EMBL" id="BC030128">
    <property type="protein sequence ID" value="AAH30128.1"/>
    <property type="molecule type" value="mRNA"/>
</dbReference>
<dbReference type="CCDS" id="CCDS3833.1">
    <molecule id="Q9H160-1"/>
</dbReference>
<dbReference type="RefSeq" id="NP_001278888.1">
    <molecule id="Q9H160-2"/>
    <property type="nucleotide sequence ID" value="NM_001291959.2"/>
</dbReference>
<dbReference type="RefSeq" id="NP_001555.1">
    <molecule id="Q9H160-1"/>
    <property type="nucleotide sequence ID" value="NM_001564.4"/>
</dbReference>
<dbReference type="SMR" id="Q9H160"/>
<dbReference type="BioGRID" id="109834">
    <property type="interactions" value="68"/>
</dbReference>
<dbReference type="ComplexPortal" id="CPX-3321">
    <property type="entry name" value="SIN3A histone deacetylase complex"/>
</dbReference>
<dbReference type="ComplexPortal" id="CPX-3322">
    <property type="entry name" value="SIN3B histone deacetylase complex"/>
</dbReference>
<dbReference type="ComplexPortal" id="CPX-3323">
    <property type="entry name" value="SIN3A histone deacetylase complex, ES cell-specific variant"/>
</dbReference>
<dbReference type="CORUM" id="Q9H160"/>
<dbReference type="FunCoup" id="Q9H160">
    <property type="interactions" value="3014"/>
</dbReference>
<dbReference type="IntAct" id="Q9H160">
    <property type="interactions" value="47"/>
</dbReference>
<dbReference type="MINT" id="Q9H160"/>
<dbReference type="STRING" id="9606.ENSP00000307183"/>
<dbReference type="BindingDB" id="Q9H160"/>
<dbReference type="ChEMBL" id="CHEMBL3784904"/>
<dbReference type="GlyGen" id="Q9H160">
    <property type="glycosylation" value="1 site, 1 O-linked glycan (1 site)"/>
</dbReference>
<dbReference type="iPTMnet" id="Q9H160"/>
<dbReference type="PhosphoSitePlus" id="Q9H160"/>
<dbReference type="BioMuta" id="ING2"/>
<dbReference type="DMDM" id="59798471"/>
<dbReference type="jPOST" id="Q9H160"/>
<dbReference type="MassIVE" id="Q9H160"/>
<dbReference type="PaxDb" id="9606-ENSP00000307183"/>
<dbReference type="PeptideAtlas" id="Q9H160"/>
<dbReference type="ProteomicsDB" id="6258"/>
<dbReference type="ProteomicsDB" id="80360">
    <molecule id="Q9H160-1"/>
</dbReference>
<dbReference type="Pumba" id="Q9H160"/>
<dbReference type="Antibodypedia" id="17300">
    <property type="antibodies" value="323 antibodies from 32 providers"/>
</dbReference>
<dbReference type="DNASU" id="3622"/>
<dbReference type="Ensembl" id="ENST00000302327.4">
    <molecule id="Q9H160-1"/>
    <property type="protein sequence ID" value="ENSP00000307183.3"/>
    <property type="gene ID" value="ENSG00000168556.7"/>
</dbReference>
<dbReference type="GeneID" id="3622"/>
<dbReference type="KEGG" id="hsa:3622"/>
<dbReference type="MANE-Select" id="ENST00000302327.4">
    <property type="protein sequence ID" value="ENSP00000307183.3"/>
    <property type="RefSeq nucleotide sequence ID" value="NM_001564.4"/>
    <property type="RefSeq protein sequence ID" value="NP_001555.1"/>
</dbReference>
<dbReference type="UCSC" id="uc003ivs.2">
    <molecule id="Q9H160-1"/>
    <property type="organism name" value="human"/>
</dbReference>
<dbReference type="AGR" id="HGNC:6063"/>
<dbReference type="CTD" id="3622"/>
<dbReference type="DisGeNET" id="3622"/>
<dbReference type="GeneCards" id="ING2"/>
<dbReference type="HGNC" id="HGNC:6063">
    <property type="gene designation" value="ING2"/>
</dbReference>
<dbReference type="HPA" id="ENSG00000168556">
    <property type="expression patterns" value="Low tissue specificity"/>
</dbReference>
<dbReference type="MIM" id="604215">
    <property type="type" value="gene"/>
</dbReference>
<dbReference type="neXtProt" id="NX_Q9H160"/>
<dbReference type="OpenTargets" id="ENSG00000168556"/>
<dbReference type="PharmGKB" id="PA29873"/>
<dbReference type="VEuPathDB" id="HostDB:ENSG00000168556"/>
<dbReference type="eggNOG" id="KOG1973">
    <property type="taxonomic scope" value="Eukaryota"/>
</dbReference>
<dbReference type="GeneTree" id="ENSGT00940000158194"/>
<dbReference type="HOGENOM" id="CLU_031900_5_0_1"/>
<dbReference type="InParanoid" id="Q9H160"/>
<dbReference type="OMA" id="QCFQDPS"/>
<dbReference type="OrthoDB" id="5411773at2759"/>
<dbReference type="PAN-GO" id="Q9H160">
    <property type="GO annotations" value="3 GO annotations based on evolutionary models"/>
</dbReference>
<dbReference type="PhylomeDB" id="Q9H160"/>
<dbReference type="TreeFam" id="TF352014"/>
<dbReference type="PathwayCommons" id="Q9H160"/>
<dbReference type="Reactome" id="R-HSA-3899300">
    <property type="pathway name" value="SUMOylation of transcription cofactors"/>
</dbReference>
<dbReference type="Reactome" id="R-HSA-6811555">
    <property type="pathway name" value="PI5P Regulates TP53 Acetylation"/>
</dbReference>
<dbReference type="SignaLink" id="Q9H160"/>
<dbReference type="SIGNOR" id="Q9H160"/>
<dbReference type="BioGRID-ORCS" id="3622">
    <property type="hits" value="20 hits in 1163 CRISPR screens"/>
</dbReference>
<dbReference type="ChiTaRS" id="ING2">
    <property type="organism name" value="human"/>
</dbReference>
<dbReference type="GeneWiki" id="ING2"/>
<dbReference type="GenomeRNAi" id="3622"/>
<dbReference type="Pharos" id="Q9H160">
    <property type="development level" value="Tchem"/>
</dbReference>
<dbReference type="PRO" id="PR:Q9H160"/>
<dbReference type="Proteomes" id="UP000005640">
    <property type="component" value="Chromosome 4"/>
</dbReference>
<dbReference type="RNAct" id="Q9H160">
    <property type="molecule type" value="protein"/>
</dbReference>
<dbReference type="Bgee" id="ENSG00000168556">
    <property type="expression patterns" value="Expressed in amniotic fluid and 212 other cell types or tissues"/>
</dbReference>
<dbReference type="ExpressionAtlas" id="Q9H160">
    <property type="expression patterns" value="baseline and differential"/>
</dbReference>
<dbReference type="GO" id="GO:0016602">
    <property type="term" value="C:CCAAT-binding factor complex"/>
    <property type="evidence" value="ECO:0000314"/>
    <property type="project" value="UniProtKB"/>
</dbReference>
<dbReference type="GO" id="GO:0005654">
    <property type="term" value="C:nucleoplasm"/>
    <property type="evidence" value="ECO:0000314"/>
    <property type="project" value="HPA"/>
</dbReference>
<dbReference type="GO" id="GO:0005634">
    <property type="term" value="C:nucleus"/>
    <property type="evidence" value="ECO:0000314"/>
    <property type="project" value="UniProtKB"/>
</dbReference>
<dbReference type="GO" id="GO:0005886">
    <property type="term" value="C:plasma membrane"/>
    <property type="evidence" value="ECO:0000315"/>
    <property type="project" value="ParkinsonsUK-UCL"/>
</dbReference>
<dbReference type="GO" id="GO:0070822">
    <property type="term" value="C:Sin3-type complex"/>
    <property type="evidence" value="ECO:0000314"/>
    <property type="project" value="UniProtKB"/>
</dbReference>
<dbReference type="GO" id="GO:0003682">
    <property type="term" value="F:chromatin binding"/>
    <property type="evidence" value="ECO:0000304"/>
    <property type="project" value="ProtInc"/>
</dbReference>
<dbReference type="GO" id="GO:0003677">
    <property type="term" value="F:DNA binding"/>
    <property type="evidence" value="ECO:0000314"/>
    <property type="project" value="UniProtKB"/>
</dbReference>
<dbReference type="GO" id="GO:0035033">
    <property type="term" value="F:histone deacetylase regulator activity"/>
    <property type="evidence" value="ECO:0000304"/>
    <property type="project" value="BHF-UCL"/>
</dbReference>
<dbReference type="GO" id="GO:0140002">
    <property type="term" value="F:histone H3K4me3 reader activity"/>
    <property type="evidence" value="ECO:0000314"/>
    <property type="project" value="UniProtKB"/>
</dbReference>
<dbReference type="GO" id="GO:0140566">
    <property type="term" value="F:histone reader activity"/>
    <property type="evidence" value="ECO:0000304"/>
    <property type="project" value="BHF-UCL"/>
</dbReference>
<dbReference type="GO" id="GO:0035064">
    <property type="term" value="F:methylated histone binding"/>
    <property type="evidence" value="ECO:0000318"/>
    <property type="project" value="GO_Central"/>
</dbReference>
<dbReference type="GO" id="GO:0035091">
    <property type="term" value="F:phosphatidylinositol binding"/>
    <property type="evidence" value="ECO:0000314"/>
    <property type="project" value="UniProtKB"/>
</dbReference>
<dbReference type="GO" id="GO:0044877">
    <property type="term" value="F:protein-containing complex binding"/>
    <property type="evidence" value="ECO:0000314"/>
    <property type="project" value="UniProtKB"/>
</dbReference>
<dbReference type="GO" id="GO:0008270">
    <property type="term" value="F:zinc ion binding"/>
    <property type="evidence" value="ECO:0007669"/>
    <property type="project" value="UniProtKB-KW"/>
</dbReference>
<dbReference type="GO" id="GO:0006974">
    <property type="term" value="P:DNA damage response"/>
    <property type="evidence" value="ECO:0000303"/>
    <property type="project" value="BHF-UCL"/>
</dbReference>
<dbReference type="GO" id="GO:0030317">
    <property type="term" value="P:flagellated sperm motility"/>
    <property type="evidence" value="ECO:0000250"/>
    <property type="project" value="BHF-UCL"/>
</dbReference>
<dbReference type="GO" id="GO:0048133">
    <property type="term" value="P:male germ-line stem cell asymmetric division"/>
    <property type="evidence" value="ECO:0000250"/>
    <property type="project" value="BHF-UCL"/>
</dbReference>
<dbReference type="GO" id="GO:0007141">
    <property type="term" value="P:male meiosis I"/>
    <property type="evidence" value="ECO:0000250"/>
    <property type="project" value="BHF-UCL"/>
</dbReference>
<dbReference type="GO" id="GO:0030336">
    <property type="term" value="P:negative regulation of cell migration"/>
    <property type="evidence" value="ECO:0000303"/>
    <property type="project" value="ComplexPortal"/>
</dbReference>
<dbReference type="GO" id="GO:0045814">
    <property type="term" value="P:negative regulation of gene expression, epigenetic"/>
    <property type="evidence" value="ECO:0000304"/>
    <property type="project" value="BHF-UCL"/>
</dbReference>
<dbReference type="GO" id="GO:1902166">
    <property type="term" value="P:negative regulation of intrinsic apoptotic signaling pathway in response to DNA damage by p53 class mediator"/>
    <property type="evidence" value="ECO:0000304"/>
    <property type="project" value="BHF-UCL"/>
</dbReference>
<dbReference type="GO" id="GO:1902455">
    <property type="term" value="P:negative regulation of stem cell population maintenance"/>
    <property type="evidence" value="ECO:0000303"/>
    <property type="project" value="ComplexPortal"/>
</dbReference>
<dbReference type="GO" id="GO:0000122">
    <property type="term" value="P:negative regulation of transcription by RNA polymerase II"/>
    <property type="evidence" value="ECO:0000303"/>
    <property type="project" value="ComplexPortal"/>
</dbReference>
<dbReference type="GO" id="GO:0030512">
    <property type="term" value="P:negative regulation of transforming growth factor beta receptor signaling pathway"/>
    <property type="evidence" value="ECO:0000303"/>
    <property type="project" value="ComplexPortal"/>
</dbReference>
<dbReference type="GO" id="GO:0045893">
    <property type="term" value="P:positive regulation of DNA-templated transcription"/>
    <property type="evidence" value="ECO:0000314"/>
    <property type="project" value="UniProtKB"/>
</dbReference>
<dbReference type="GO" id="GO:1902459">
    <property type="term" value="P:positive regulation of stem cell population maintenance"/>
    <property type="evidence" value="ECO:0000303"/>
    <property type="project" value="ComplexPortal"/>
</dbReference>
<dbReference type="GO" id="GO:0030511">
    <property type="term" value="P:positive regulation of transforming growth factor beta receptor signaling pathway"/>
    <property type="evidence" value="ECO:0000314"/>
    <property type="project" value="UniProtKB"/>
</dbReference>
<dbReference type="GO" id="GO:2000772">
    <property type="term" value="P:regulation of cellular senescence"/>
    <property type="evidence" value="ECO:0000303"/>
    <property type="project" value="BHF-UCL"/>
</dbReference>
<dbReference type="GO" id="GO:0006355">
    <property type="term" value="P:regulation of DNA-templated transcription"/>
    <property type="evidence" value="ECO:0000314"/>
    <property type="project" value="UniProtKB"/>
</dbReference>
<dbReference type="GO" id="GO:0072520">
    <property type="term" value="P:seminiferous tubule development"/>
    <property type="evidence" value="ECO:0000250"/>
    <property type="project" value="BHF-UCL"/>
</dbReference>
<dbReference type="GO" id="GO:0007165">
    <property type="term" value="P:signal transduction"/>
    <property type="evidence" value="ECO:0000304"/>
    <property type="project" value="ProtInc"/>
</dbReference>
<dbReference type="GO" id="GO:0007286">
    <property type="term" value="P:spermatid development"/>
    <property type="evidence" value="ECO:0000250"/>
    <property type="project" value="BHF-UCL"/>
</dbReference>
<dbReference type="GO" id="GO:0007283">
    <property type="term" value="P:spermatogenesis"/>
    <property type="evidence" value="ECO:0000250"/>
    <property type="project" value="BHF-UCL"/>
</dbReference>
<dbReference type="CDD" id="cd16861">
    <property type="entry name" value="ING_ING2"/>
    <property type="match status" value="1"/>
</dbReference>
<dbReference type="CDD" id="cd15683">
    <property type="entry name" value="PHD_ING2"/>
    <property type="match status" value="1"/>
</dbReference>
<dbReference type="FunFam" id="3.30.40.10:FF:000021">
    <property type="entry name" value="Inhibitor of growth 2b"/>
    <property type="match status" value="1"/>
</dbReference>
<dbReference type="Gene3D" id="6.10.140.1740">
    <property type="match status" value="1"/>
</dbReference>
<dbReference type="Gene3D" id="3.30.40.10">
    <property type="entry name" value="Zinc/RING finger domain, C3HC4 (zinc finger)"/>
    <property type="match status" value="1"/>
</dbReference>
<dbReference type="InterPro" id="IPR042019">
    <property type="entry name" value="ING2_PHD"/>
</dbReference>
<dbReference type="InterPro" id="IPR028651">
    <property type="entry name" value="ING_fam"/>
</dbReference>
<dbReference type="InterPro" id="IPR024610">
    <property type="entry name" value="ING_N_histone-binding"/>
</dbReference>
<dbReference type="InterPro" id="IPR019786">
    <property type="entry name" value="Zinc_finger_PHD-type_CS"/>
</dbReference>
<dbReference type="InterPro" id="IPR011011">
    <property type="entry name" value="Znf_FYVE_PHD"/>
</dbReference>
<dbReference type="InterPro" id="IPR001965">
    <property type="entry name" value="Znf_PHD"/>
</dbReference>
<dbReference type="InterPro" id="IPR019787">
    <property type="entry name" value="Znf_PHD-finger"/>
</dbReference>
<dbReference type="InterPro" id="IPR013083">
    <property type="entry name" value="Znf_RING/FYVE/PHD"/>
</dbReference>
<dbReference type="PANTHER" id="PTHR10333">
    <property type="entry name" value="INHIBITOR OF GROWTH PROTEIN"/>
    <property type="match status" value="1"/>
</dbReference>
<dbReference type="PANTHER" id="PTHR10333:SF37">
    <property type="entry name" value="INHIBITOR OF GROWTH PROTEIN 2"/>
    <property type="match status" value="1"/>
</dbReference>
<dbReference type="Pfam" id="PF12998">
    <property type="entry name" value="ING"/>
    <property type="match status" value="1"/>
</dbReference>
<dbReference type="SMART" id="SM01408">
    <property type="entry name" value="ING"/>
    <property type="match status" value="1"/>
</dbReference>
<dbReference type="SMART" id="SM00249">
    <property type="entry name" value="PHD"/>
    <property type="match status" value="1"/>
</dbReference>
<dbReference type="SUPFAM" id="SSF57903">
    <property type="entry name" value="FYVE/PHD zinc finger"/>
    <property type="match status" value="1"/>
</dbReference>
<dbReference type="PROSITE" id="PS01359">
    <property type="entry name" value="ZF_PHD_1"/>
    <property type="match status" value="1"/>
</dbReference>
<dbReference type="PROSITE" id="PS50016">
    <property type="entry name" value="ZF_PHD_2"/>
    <property type="match status" value="1"/>
</dbReference>
<proteinExistence type="evidence at protein level"/>
<gene>
    <name type="primary">ING2</name>
    <name type="synonym">ING1L</name>
</gene>
<protein>
    <recommendedName>
        <fullName>Inhibitor of growth protein 2</fullName>
    </recommendedName>
    <alternativeName>
        <fullName>Inhibitor of growth 1-like protein</fullName>
        <shortName>ING1Lp</shortName>
    </alternativeName>
    <alternativeName>
        <fullName>p32</fullName>
    </alternativeName>
    <alternativeName>
        <fullName>p33ING2</fullName>
    </alternativeName>
</protein>
<comment type="function">
    <text evidence="6 8">Seems to be involved in p53/TP53 activation and p53/TP53-dependent apoptotic pathways, probably by enhancing acetylation of p53/TP53. Component of a mSin3A-like corepressor complex, which is probably involved in deacetylation of nucleosomal histones. ING2 activity seems to be modulated by binding to phosphoinositides (PtdInsPs).</text>
</comment>
<comment type="subunit">
    <text evidence="7 9 10">Interacts with H3K4me3 and to a lesser extent with H3K4me2. Component of a mSin3A-like complex at least consisting of SIN3A, HDAC1, HDAC2, RBBP4/RbAp48, RBBP7/RbAp46, SAP30 and ING2.</text>
</comment>
<comment type="interaction">
    <interactant intactId="EBI-389787">
        <id>Q9H160</id>
    </interactant>
    <interactant intactId="EBI-358311">
        <id>P12004</id>
        <label>PCNA</label>
    </interactant>
    <organismsDiffer>false</organismsDiffer>
    <experiments>3</experiments>
</comment>
<comment type="interaction">
    <interactant intactId="EBI-389787">
        <id>Q9H160</id>
    </interactant>
    <interactant intactId="EBI-347218">
        <id>Q96ST3</id>
        <label>SIN3A</label>
    </interactant>
    <organismsDiffer>false</organismsDiffer>
    <experiments>4</experiments>
</comment>
<comment type="interaction">
    <interactant intactId="EBI-389787">
        <id>Q9H160</id>
    </interactant>
    <interactant intactId="EBI-9845742">
        <id>Q9HCE7-2</id>
        <label>SMURF1</label>
    </interactant>
    <organismsDiffer>false</organismsDiffer>
    <experiments>3</experiments>
</comment>
<comment type="subcellular location">
    <subcellularLocation>
        <location evidence="8">Nucleus</location>
    </subcellularLocation>
    <text>Predominantly nuclear. Localized to chromatin and nuclear matrix. Upon reduced PtdIns(5)P levels seems to be released from chromatin and, at least partially, translocated to the cytoplasm.</text>
</comment>
<comment type="alternative products">
    <event type="alternative splicing"/>
    <isoform>
        <id>Q9H160-1</id>
        <name>ING2a</name>
        <sequence type="displayed"/>
    </isoform>
    <isoform>
        <id>Q9H160-2</id>
        <name>ING2b</name>
        <sequence type="described" ref="VSP_047821"/>
    </isoform>
</comment>
<comment type="tissue specificity">
    <text evidence="5">Widely expressed. Higher expressed in colon-cancer tumor than in normal colon tissues.</text>
</comment>
<comment type="induction">
    <text evidence="6">Induced by the DNA-damaging agents etoposide and neocarzinostatin.</text>
</comment>
<comment type="domain">
    <text evidence="10">The PHD-type zinc finger mediates the binding to H3K4me3.</text>
</comment>
<comment type="domain">
    <text evidence="10">The polybasic region (PBR) is responsive to the binding to phosphoinositides (PtdInsPs), including phosphatidylinositol 5-phosphate (PtdIns(5)P).</text>
</comment>
<comment type="PTM">
    <text evidence="11">Sumoylation enhances its association with SIN3A and is required for binding to some target gene promoters, this is the case for TMEM71.</text>
</comment>
<comment type="miscellaneous">
    <molecule>Isoform ING2b</molecule>
    <text evidence="14">Low expression except in testis, where it reaches half of ING2a levels.</text>
</comment>
<comment type="similarity">
    <text evidence="14">Belongs to the ING family.</text>
</comment>
<comment type="online information" name="Atlas of Genetics and Cytogenetics in Oncology and Haematology">
    <link uri="https://atlasgeneticsoncology.org/gene/40975/ING2"/>
</comment>
<reference key="1">
    <citation type="journal article" date="1998" name="Cytogenet. Cell Genet.">
        <title>Cloning of a novel gene (ING1L) homologous to ING1, a candidate tumor suppressor.</title>
        <authorList>
            <person name="Shimada Y."/>
            <person name="Saito A."/>
            <person name="Suzuki M."/>
            <person name="Takahashi E."/>
            <person name="Horie M."/>
        </authorList>
    </citation>
    <scope>NUCLEOTIDE SEQUENCE [GENOMIC DNA / MRNA] (ISOFORM ING2A)</scope>
    <scope>TISSUE SPECIFICITY</scope>
</reference>
<reference key="2">
    <citation type="journal article" date="2001" name="Proc. Natl. Acad. Sci. U.S.A.">
        <title>DNA damage-inducible gene p33ING2 negatively regulates cell proliferation through acetylation of p53.</title>
        <authorList>
            <person name="Nagashima M."/>
            <person name="Shiseki M."/>
            <person name="Miura K."/>
            <person name="Hagiwara K."/>
            <person name="Linke S.P."/>
            <person name="Pedeux R."/>
            <person name="Wang X.W."/>
            <person name="Yokota J."/>
            <person name="Riabowol K."/>
            <person name="Harris C.C."/>
        </authorList>
    </citation>
    <scope>NUCLEOTIDE SEQUENCE [MRNA] (ISOFORM ING2A)</scope>
    <scope>FUNCTION</scope>
    <scope>INDUCTION</scope>
</reference>
<reference key="3">
    <citation type="journal article" date="2008" name="FEBS Lett.">
        <title>A novel ING2 isoform, ING2b, synergizes with ING2a to prevent cell cycle arrest and apoptosis.</title>
        <authorList>
            <person name="Unoki M."/>
            <person name="Kumamoto K."/>
            <person name="Robles A.I."/>
            <person name="Shen J.C."/>
            <person name="Zheng Z.-M."/>
            <person name="Harris C.C."/>
        </authorList>
    </citation>
    <scope>NUCLEOTIDE SEQUENCE [MRNA] (ISOFORM ING2B)</scope>
    <scope>ALTERNATIVE SPLICING</scope>
</reference>
<reference key="4">
    <citation type="submission" date="1998-06" db="EMBL/GenBank/DDBJ databases">
        <title>ING2, a new possible gene suppressor tumor.</title>
        <authorList>
            <person name="Cal S."/>
            <person name="Freije J.M."/>
            <person name="Lopez-Otin C."/>
        </authorList>
    </citation>
    <scope>NUCLEOTIDE SEQUENCE [MRNA] (ISOFORM ING2A)</scope>
    <source>
        <tissue>Mammary tumor</tissue>
    </source>
</reference>
<reference key="5">
    <citation type="journal article" date="2004" name="Nat. Genet.">
        <title>Complete sequencing and characterization of 21,243 full-length human cDNAs.</title>
        <authorList>
            <person name="Ota T."/>
            <person name="Suzuki Y."/>
            <person name="Nishikawa T."/>
            <person name="Otsuki T."/>
            <person name="Sugiyama T."/>
            <person name="Irie R."/>
            <person name="Wakamatsu A."/>
            <person name="Hayashi K."/>
            <person name="Sato H."/>
            <person name="Nagai K."/>
            <person name="Kimura K."/>
            <person name="Makita H."/>
            <person name="Sekine M."/>
            <person name="Obayashi M."/>
            <person name="Nishi T."/>
            <person name="Shibahara T."/>
            <person name="Tanaka T."/>
            <person name="Ishii S."/>
            <person name="Yamamoto J."/>
            <person name="Saito K."/>
            <person name="Kawai Y."/>
            <person name="Isono Y."/>
            <person name="Nakamura Y."/>
            <person name="Nagahari K."/>
            <person name="Murakami K."/>
            <person name="Yasuda T."/>
            <person name="Iwayanagi T."/>
            <person name="Wagatsuma M."/>
            <person name="Shiratori A."/>
            <person name="Sudo H."/>
            <person name="Hosoiri T."/>
            <person name="Kaku Y."/>
            <person name="Kodaira H."/>
            <person name="Kondo H."/>
            <person name="Sugawara M."/>
            <person name="Takahashi M."/>
            <person name="Kanda K."/>
            <person name="Yokoi T."/>
            <person name="Furuya T."/>
            <person name="Kikkawa E."/>
            <person name="Omura Y."/>
            <person name="Abe K."/>
            <person name="Kamihara K."/>
            <person name="Katsuta N."/>
            <person name="Sato K."/>
            <person name="Tanikawa M."/>
            <person name="Yamazaki M."/>
            <person name="Ninomiya K."/>
            <person name="Ishibashi T."/>
            <person name="Yamashita H."/>
            <person name="Murakawa K."/>
            <person name="Fujimori K."/>
            <person name="Tanai H."/>
            <person name="Kimata M."/>
            <person name="Watanabe M."/>
            <person name="Hiraoka S."/>
            <person name="Chiba Y."/>
            <person name="Ishida S."/>
            <person name="Ono Y."/>
            <person name="Takiguchi S."/>
            <person name="Watanabe S."/>
            <person name="Yosida M."/>
            <person name="Hotuta T."/>
            <person name="Kusano J."/>
            <person name="Kanehori K."/>
            <person name="Takahashi-Fujii A."/>
            <person name="Hara H."/>
            <person name="Tanase T.-O."/>
            <person name="Nomura Y."/>
            <person name="Togiya S."/>
            <person name="Komai F."/>
            <person name="Hara R."/>
            <person name="Takeuchi K."/>
            <person name="Arita M."/>
            <person name="Imose N."/>
            <person name="Musashino K."/>
            <person name="Yuuki H."/>
            <person name="Oshima A."/>
            <person name="Sasaki N."/>
            <person name="Aotsuka S."/>
            <person name="Yoshikawa Y."/>
            <person name="Matsunawa H."/>
            <person name="Ichihara T."/>
            <person name="Shiohata N."/>
            <person name="Sano S."/>
            <person name="Moriya S."/>
            <person name="Momiyama H."/>
            <person name="Satoh N."/>
            <person name="Takami S."/>
            <person name="Terashima Y."/>
            <person name="Suzuki O."/>
            <person name="Nakagawa S."/>
            <person name="Senoh A."/>
            <person name="Mizoguchi H."/>
            <person name="Goto Y."/>
            <person name="Shimizu F."/>
            <person name="Wakebe H."/>
            <person name="Hishigaki H."/>
            <person name="Watanabe T."/>
            <person name="Sugiyama A."/>
            <person name="Takemoto M."/>
            <person name="Kawakami B."/>
            <person name="Yamazaki M."/>
            <person name="Watanabe K."/>
            <person name="Kumagai A."/>
            <person name="Itakura S."/>
            <person name="Fukuzumi Y."/>
            <person name="Fujimori Y."/>
            <person name="Komiyama M."/>
            <person name="Tashiro H."/>
            <person name="Tanigami A."/>
            <person name="Fujiwara T."/>
            <person name="Ono T."/>
            <person name="Yamada K."/>
            <person name="Fujii Y."/>
            <person name="Ozaki K."/>
            <person name="Hirao M."/>
            <person name="Ohmori Y."/>
            <person name="Kawabata A."/>
            <person name="Hikiji T."/>
            <person name="Kobatake N."/>
            <person name="Inagaki H."/>
            <person name="Ikema Y."/>
            <person name="Okamoto S."/>
            <person name="Okitani R."/>
            <person name="Kawakami T."/>
            <person name="Noguchi S."/>
            <person name="Itoh T."/>
            <person name="Shigeta K."/>
            <person name="Senba T."/>
            <person name="Matsumura K."/>
            <person name="Nakajima Y."/>
            <person name="Mizuno T."/>
            <person name="Morinaga M."/>
            <person name="Sasaki M."/>
            <person name="Togashi T."/>
            <person name="Oyama M."/>
            <person name="Hata H."/>
            <person name="Watanabe M."/>
            <person name="Komatsu T."/>
            <person name="Mizushima-Sugano J."/>
            <person name="Satoh T."/>
            <person name="Shirai Y."/>
            <person name="Takahashi Y."/>
            <person name="Nakagawa K."/>
            <person name="Okumura K."/>
            <person name="Nagase T."/>
            <person name="Nomura N."/>
            <person name="Kikuchi H."/>
            <person name="Masuho Y."/>
            <person name="Yamashita R."/>
            <person name="Nakai K."/>
            <person name="Yada T."/>
            <person name="Nakamura Y."/>
            <person name="Ohara O."/>
            <person name="Isogai T."/>
            <person name="Sugano S."/>
        </authorList>
    </citation>
    <scope>NUCLEOTIDE SEQUENCE [LARGE SCALE MRNA] (ISOFORM ING2B)</scope>
    <source>
        <tissue>Amygdala</tissue>
    </source>
</reference>
<reference key="6">
    <citation type="journal article" date="2005" name="Nature">
        <title>Generation and annotation of the DNA sequences of human chromosomes 2 and 4.</title>
        <authorList>
            <person name="Hillier L.W."/>
            <person name="Graves T.A."/>
            <person name="Fulton R.S."/>
            <person name="Fulton L.A."/>
            <person name="Pepin K.H."/>
            <person name="Minx P."/>
            <person name="Wagner-McPherson C."/>
            <person name="Layman D."/>
            <person name="Wylie K."/>
            <person name="Sekhon M."/>
            <person name="Becker M.C."/>
            <person name="Fewell G.A."/>
            <person name="Delehaunty K.D."/>
            <person name="Miner T.L."/>
            <person name="Nash W.E."/>
            <person name="Kremitzki C."/>
            <person name="Oddy L."/>
            <person name="Du H."/>
            <person name="Sun H."/>
            <person name="Bradshaw-Cordum H."/>
            <person name="Ali J."/>
            <person name="Carter J."/>
            <person name="Cordes M."/>
            <person name="Harris A."/>
            <person name="Isak A."/>
            <person name="van Brunt A."/>
            <person name="Nguyen C."/>
            <person name="Du F."/>
            <person name="Courtney L."/>
            <person name="Kalicki J."/>
            <person name="Ozersky P."/>
            <person name="Abbott S."/>
            <person name="Armstrong J."/>
            <person name="Belter E.A."/>
            <person name="Caruso L."/>
            <person name="Cedroni M."/>
            <person name="Cotton M."/>
            <person name="Davidson T."/>
            <person name="Desai A."/>
            <person name="Elliott G."/>
            <person name="Erb T."/>
            <person name="Fronick C."/>
            <person name="Gaige T."/>
            <person name="Haakenson W."/>
            <person name="Haglund K."/>
            <person name="Holmes A."/>
            <person name="Harkins R."/>
            <person name="Kim K."/>
            <person name="Kruchowski S.S."/>
            <person name="Strong C.M."/>
            <person name="Grewal N."/>
            <person name="Goyea E."/>
            <person name="Hou S."/>
            <person name="Levy A."/>
            <person name="Martinka S."/>
            <person name="Mead K."/>
            <person name="McLellan M.D."/>
            <person name="Meyer R."/>
            <person name="Randall-Maher J."/>
            <person name="Tomlinson C."/>
            <person name="Dauphin-Kohlberg S."/>
            <person name="Kozlowicz-Reilly A."/>
            <person name="Shah N."/>
            <person name="Swearengen-Shahid S."/>
            <person name="Snider J."/>
            <person name="Strong J.T."/>
            <person name="Thompson J."/>
            <person name="Yoakum M."/>
            <person name="Leonard S."/>
            <person name="Pearman C."/>
            <person name="Trani L."/>
            <person name="Radionenko M."/>
            <person name="Waligorski J.E."/>
            <person name="Wang C."/>
            <person name="Rock S.M."/>
            <person name="Tin-Wollam A.-M."/>
            <person name="Maupin R."/>
            <person name="Latreille P."/>
            <person name="Wendl M.C."/>
            <person name="Yang S.-P."/>
            <person name="Pohl C."/>
            <person name="Wallis J.W."/>
            <person name="Spieth J."/>
            <person name="Bieri T.A."/>
            <person name="Berkowicz N."/>
            <person name="Nelson J.O."/>
            <person name="Osborne J."/>
            <person name="Ding L."/>
            <person name="Meyer R."/>
            <person name="Sabo A."/>
            <person name="Shotland Y."/>
            <person name="Sinha P."/>
            <person name="Wohldmann P.E."/>
            <person name="Cook L.L."/>
            <person name="Hickenbotham M.T."/>
            <person name="Eldred J."/>
            <person name="Williams D."/>
            <person name="Jones T.A."/>
            <person name="She X."/>
            <person name="Ciccarelli F.D."/>
            <person name="Izaurralde E."/>
            <person name="Taylor J."/>
            <person name="Schmutz J."/>
            <person name="Myers R.M."/>
            <person name="Cox D.R."/>
            <person name="Huang X."/>
            <person name="McPherson J.D."/>
            <person name="Mardis E.R."/>
            <person name="Clifton S.W."/>
            <person name="Warren W.C."/>
            <person name="Chinwalla A.T."/>
            <person name="Eddy S.R."/>
            <person name="Marra M.A."/>
            <person name="Ovcharenko I."/>
            <person name="Furey T.S."/>
            <person name="Miller W."/>
            <person name="Eichler E.E."/>
            <person name="Bork P."/>
            <person name="Suyama M."/>
            <person name="Torrents D."/>
            <person name="Waterston R.H."/>
            <person name="Wilson R.K."/>
        </authorList>
    </citation>
    <scope>NUCLEOTIDE SEQUENCE [LARGE SCALE GENOMIC DNA]</scope>
</reference>
<reference key="7">
    <citation type="journal article" date="2004" name="Genome Res.">
        <title>The status, quality, and expansion of the NIH full-length cDNA project: the Mammalian Gene Collection (MGC).</title>
        <authorList>
            <consortium name="The MGC Project Team"/>
        </authorList>
    </citation>
    <scope>NUCLEOTIDE SEQUENCE [LARGE SCALE MRNA] (ISOFORM ING2A)</scope>
    <source>
        <tissue>Lung</tissue>
    </source>
</reference>
<reference key="8">
    <citation type="journal article" date="2002" name="Mol. Cell. Biol.">
        <title>Role of the Sin3-histone deacetylase complex in growth regulation by the candidate tumor suppressor p33(ING1).</title>
        <authorList>
            <person name="Kuzmichev A."/>
            <person name="Zhang Y."/>
            <person name="Erdjument-Bromage H."/>
            <person name="Tempst P."/>
            <person name="Reinberg D."/>
        </authorList>
    </citation>
    <scope>PROTEIN SEQUENCE OF 23-44</scope>
    <scope>IDENTIFICATION IN MSIN3A-LIKE COMPLEX</scope>
    <scope>IDENTIFICATION BY MASS SPECTROMETRY</scope>
</reference>
<reference key="9">
    <citation type="journal article" date="2003" name="Cell">
        <title>The PHD finger of the chromatin-associated protein ING2 functions as a nuclear phosphoinositide receptor.</title>
        <authorList>
            <person name="Gozani O."/>
            <person name="Karuman P."/>
            <person name="Jones D.R."/>
            <person name="Ivanov D."/>
            <person name="Cha J."/>
            <person name="Lugovskoy A.A."/>
            <person name="Baird C.L."/>
            <person name="Zhu H."/>
            <person name="Field S.J."/>
            <person name="Lessnick S.L."/>
            <person name="Villasenor J."/>
            <person name="Mehrotra B."/>
            <person name="Chen J."/>
            <person name="Rao V.R."/>
            <person name="Brugge J.S."/>
            <person name="Ferguson C.G."/>
            <person name="Payrastre B."/>
            <person name="Myszka D.G."/>
            <person name="Cantley L.C."/>
            <person name="Wagner G."/>
            <person name="Divecha N."/>
            <person name="Prestwich G.D."/>
            <person name="Yuan J."/>
        </authorList>
    </citation>
    <scope>FUNCTION</scope>
    <scope>SUBCELLULAR LOCATION</scope>
</reference>
<reference key="10">
    <citation type="journal article" date="2006" name="J. Biol. Chem.">
        <title>The polybasic region that follows the plant homeodomain zinc finger 1 of Pf1 is necessary and sufficient for specific phosphoinositide binding.</title>
        <authorList>
            <person name="Kaadige M.R."/>
            <person name="Ayer D.E."/>
        </authorList>
    </citation>
    <scope>PHOSPHOINOSITIDE-BINDING</scope>
</reference>
<reference key="11">
    <citation type="journal article" date="2006" name="Mol. Cell">
        <title>ING tumor suppressor proteins are critical regulators of chromatin acetylation required for genome expression and perpetuation.</title>
        <authorList>
            <person name="Doyon Y."/>
            <person name="Cayrou C."/>
            <person name="Ullah M."/>
            <person name="Landry A.-J."/>
            <person name="Cote V."/>
            <person name="Selleck W."/>
            <person name="Lane W.S."/>
            <person name="Tan S."/>
            <person name="Yang X.-J."/>
            <person name="Cote J."/>
        </authorList>
    </citation>
    <scope>IDENTIFICATION IN MSIN3A COMPLEX</scope>
</reference>
<reference key="12">
    <citation type="journal article" date="2006" name="Nature">
        <title>ING2 PHD domain links histone H3 lysine 4 methylation to active gene repression.</title>
        <authorList>
            <person name="Shi X."/>
            <person name="Hong T."/>
            <person name="Walter K.L."/>
            <person name="Ewalt M."/>
            <person name="Michishita E."/>
            <person name="Hung T."/>
            <person name="Carney D."/>
            <person name="Pena P."/>
            <person name="Lan F."/>
            <person name="Kaadige M.R."/>
            <person name="Lacoste N."/>
            <person name="Cayrou C."/>
            <person name="Davrazou F."/>
            <person name="Saha A."/>
            <person name="Cairns B.R."/>
            <person name="Ayer D.E."/>
            <person name="Kutateladze T.G."/>
            <person name="Shi Y."/>
            <person name="Cote J."/>
            <person name="Chua K.F."/>
            <person name="Gozani O."/>
        </authorList>
    </citation>
    <scope>DOMAIN PHD-TYPE ZINC-FINGER</scope>
    <scope>INTERACTION WITH HISTONES H3K4ME3 AND H3K4ME2</scope>
</reference>
<reference key="13">
    <citation type="journal article" date="2010" name="Oncogene">
        <title>Sumoylation of ING2 regulates the transcription mediated by Sin3A.</title>
        <authorList>
            <person name="Ythier D."/>
            <person name="Larrieu D."/>
            <person name="Binet R."/>
            <person name="Binda O."/>
            <person name="Brambilla C."/>
            <person name="Gazzeri S."/>
            <person name="Pedeux R."/>
        </authorList>
    </citation>
    <scope>SUMOYLATION AT LYS-195</scope>
</reference>
<feature type="chain" id="PRO_0000212663" description="Inhibitor of growth protein 2">
    <location>
        <begin position="1"/>
        <end position="280"/>
    </location>
</feature>
<feature type="zinc finger region" description="PHD-type" evidence="3">
    <location>
        <begin position="212"/>
        <end position="261"/>
    </location>
</feature>
<feature type="region of interest" description="Disordered" evidence="4">
    <location>
        <begin position="122"/>
        <end position="204"/>
    </location>
</feature>
<feature type="region of interest" description="Disordered" evidence="4">
    <location>
        <begin position="258"/>
        <end position="280"/>
    </location>
</feature>
<feature type="region of interest" description="PBR" evidence="10">
    <location>
        <begin position="264"/>
        <end position="280"/>
    </location>
</feature>
<feature type="coiled-coil region" evidence="2">
    <location>
        <begin position="48"/>
        <end position="120"/>
    </location>
</feature>
<feature type="compositionally biased region" description="Basic and acidic residues" evidence="4">
    <location>
        <begin position="130"/>
        <end position="140"/>
    </location>
</feature>
<feature type="compositionally biased region" description="Basic residues" evidence="4">
    <location>
        <begin position="181"/>
        <end position="193"/>
    </location>
</feature>
<feature type="compositionally biased region" description="Basic and acidic residues" evidence="4">
    <location>
        <begin position="258"/>
        <end position="274"/>
    </location>
</feature>
<feature type="binding site" evidence="1">
    <location>
        <position position="215"/>
    </location>
    <ligand>
        <name>Zn(2+)</name>
        <dbReference type="ChEBI" id="CHEBI:29105"/>
        <label>1</label>
    </ligand>
</feature>
<feature type="binding site" evidence="1">
    <location>
        <position position="217"/>
    </location>
    <ligand>
        <name>Zn(2+)</name>
        <dbReference type="ChEBI" id="CHEBI:29105"/>
        <label>1</label>
    </ligand>
</feature>
<feature type="binding site" evidence="1">
    <location>
        <position position="228"/>
    </location>
    <ligand>
        <name>Zn(2+)</name>
        <dbReference type="ChEBI" id="CHEBI:29105"/>
        <label>2</label>
    </ligand>
</feature>
<feature type="binding site" evidence="1">
    <location>
        <position position="233"/>
    </location>
    <ligand>
        <name>Zn(2+)</name>
        <dbReference type="ChEBI" id="CHEBI:29105"/>
        <label>2</label>
    </ligand>
</feature>
<feature type="binding site" evidence="1">
    <location>
        <position position="239"/>
    </location>
    <ligand>
        <name>Zn(2+)</name>
        <dbReference type="ChEBI" id="CHEBI:29105"/>
        <label>1</label>
    </ligand>
</feature>
<feature type="binding site" evidence="1">
    <location>
        <position position="242"/>
    </location>
    <ligand>
        <name>Zn(2+)</name>
        <dbReference type="ChEBI" id="CHEBI:29105"/>
        <label>1</label>
    </ligand>
</feature>
<feature type="binding site" evidence="1">
    <location>
        <position position="255"/>
    </location>
    <ligand>
        <name>Zn(2+)</name>
        <dbReference type="ChEBI" id="CHEBI:29105"/>
        <label>2</label>
    </ligand>
</feature>
<feature type="binding site" evidence="1">
    <location>
        <position position="258"/>
    </location>
    <ligand>
        <name>Zn(2+)</name>
        <dbReference type="ChEBI" id="CHEBI:29105"/>
        <label>2</label>
    </ligand>
</feature>
<feature type="site" description="Histone H3K4me3 binding" evidence="1">
    <location>
        <position position="214"/>
    </location>
</feature>
<feature type="site" description="Histone H3K4me3 binding" evidence="1">
    <location>
        <position position="225"/>
    </location>
</feature>
<feature type="site" description="Histone H3K4me3 binding" evidence="1">
    <location>
        <position position="229"/>
    </location>
</feature>
<feature type="site" description="Histone H3K4me3 binding" evidence="1">
    <location>
        <position position="237"/>
    </location>
</feature>
<feature type="cross-link" description="Glycyl lysine isopeptide (Lys-Gly) (interchain with G-Cter in SUMO1)" evidence="11">
    <location>
        <position position="195"/>
    </location>
</feature>
<feature type="splice variant" id="VSP_047821" description="In isoform ING2b." evidence="12 13">
    <original>MLGQQQQQLYSSAALLTGERSRLLTCYVQDYLECVESLPHDMQRNVSVLRELDNKYQE</original>
    <variation>MDQDGDQQLGPSRILAPQ</variation>
    <location>
        <begin position="1"/>
        <end position="58"/>
    </location>
</feature>
<feature type="sequence conflict" description="In Ref. 4; CAC20567." evidence="14" ref="4">
    <original>S</original>
    <variation>T</variation>
    <location>
        <position position="21"/>
    </location>
</feature>
<keyword id="KW-0025">Alternative splicing</keyword>
<keyword id="KW-0156">Chromatin regulator</keyword>
<keyword id="KW-0175">Coiled coil</keyword>
<keyword id="KW-0903">Direct protein sequencing</keyword>
<keyword id="KW-0341">Growth regulation</keyword>
<keyword id="KW-1017">Isopeptide bond</keyword>
<keyword id="KW-0479">Metal-binding</keyword>
<keyword id="KW-0539">Nucleus</keyword>
<keyword id="KW-1267">Proteomics identification</keyword>
<keyword id="KW-1185">Reference proteome</keyword>
<keyword id="KW-0804">Transcription</keyword>
<keyword id="KW-0805">Transcription regulation</keyword>
<keyword id="KW-0832">Ubl conjugation</keyword>
<keyword id="KW-0862">Zinc</keyword>
<keyword id="KW-0863">Zinc-finger</keyword>